<organism>
    <name type="scientific">Desulforudis audaxviator (strain MP104C)</name>
    <dbReference type="NCBI Taxonomy" id="477974"/>
    <lineage>
        <taxon>Bacteria</taxon>
        <taxon>Bacillati</taxon>
        <taxon>Bacillota</taxon>
        <taxon>Clostridia</taxon>
        <taxon>Thermoanaerobacterales</taxon>
        <taxon>Candidatus Desulforudaceae</taxon>
        <taxon>Candidatus Desulforudis</taxon>
    </lineage>
</organism>
<proteinExistence type="inferred from homology"/>
<reference key="1">
    <citation type="submission" date="2007-10" db="EMBL/GenBank/DDBJ databases">
        <title>Complete sequence of chromosome of Desulforudis audaxviator MP104C.</title>
        <authorList>
            <person name="Copeland A."/>
            <person name="Lucas S."/>
            <person name="Lapidus A."/>
            <person name="Barry K."/>
            <person name="Glavina del Rio T."/>
            <person name="Dalin E."/>
            <person name="Tice H."/>
            <person name="Bruce D."/>
            <person name="Pitluck S."/>
            <person name="Lowry S.R."/>
            <person name="Larimer F."/>
            <person name="Land M.L."/>
            <person name="Hauser L."/>
            <person name="Kyrpides N."/>
            <person name="Ivanova N.N."/>
            <person name="Richardson P."/>
        </authorList>
    </citation>
    <scope>NUCLEOTIDE SEQUENCE [LARGE SCALE GENOMIC DNA]</scope>
    <source>
        <strain>MP104C</strain>
    </source>
</reference>
<name>SPEE_DESAP</name>
<keyword id="KW-0963">Cytoplasm</keyword>
<keyword id="KW-0620">Polyamine biosynthesis</keyword>
<keyword id="KW-1185">Reference proteome</keyword>
<keyword id="KW-0745">Spermidine biosynthesis</keyword>
<keyword id="KW-0808">Transferase</keyword>
<accession>B1I5Z0</accession>
<gene>
    <name evidence="1" type="primary">speE</name>
    <name type="ordered locus">Daud_1979</name>
</gene>
<comment type="function">
    <text evidence="1">Catalyzes the irreversible transfer of a propylamine group from the amino donor S-adenosylmethioninamine (decarboxy-AdoMet) to putrescine (1,4-diaminobutane) to yield spermidine.</text>
</comment>
<comment type="catalytic activity">
    <reaction evidence="1">
        <text>S-adenosyl 3-(methylsulfanyl)propylamine + putrescine = S-methyl-5'-thioadenosine + spermidine + H(+)</text>
        <dbReference type="Rhea" id="RHEA:12721"/>
        <dbReference type="ChEBI" id="CHEBI:15378"/>
        <dbReference type="ChEBI" id="CHEBI:17509"/>
        <dbReference type="ChEBI" id="CHEBI:57443"/>
        <dbReference type="ChEBI" id="CHEBI:57834"/>
        <dbReference type="ChEBI" id="CHEBI:326268"/>
        <dbReference type="EC" id="2.5.1.16"/>
    </reaction>
</comment>
<comment type="pathway">
    <text evidence="1">Amine and polyamine biosynthesis; spermidine biosynthesis; spermidine from putrescine: step 1/1.</text>
</comment>
<comment type="subunit">
    <text evidence="1">Homodimer or homotetramer.</text>
</comment>
<comment type="subcellular location">
    <subcellularLocation>
        <location evidence="1">Cytoplasm</location>
    </subcellularLocation>
</comment>
<comment type="similarity">
    <text evidence="1">Belongs to the spermidine/spermine synthase family.</text>
</comment>
<evidence type="ECO:0000255" key="1">
    <source>
        <dbReference type="HAMAP-Rule" id="MF_00198"/>
    </source>
</evidence>
<sequence>MHLWFTEKQNDNFAISYRVNETLHTETTPFQHLAVLDTVPFGRTLVLDGIVQTSVVDEYVYHEMITHVPLNTHPDPRRVLIVGGGDGGTLREVTKHPSVEKATLVEIDERVIAASKKYLPELACGFDSPKAEVVIGDGIKYVAEHKKTFDLVIVDSTDPIGPAVGLFSLEFYRSIYEALKDEGLFVAQTESPYFNTDLILRIYRDIAGIFPLARTYWACIPTYPGAMWSFTIGSKKHDPAQVAPEKIREHATRYYTPEIHRASFAMPRFLADRFR</sequence>
<feature type="chain" id="PRO_1000204071" description="Polyamine aminopropyltransferase">
    <location>
        <begin position="1"/>
        <end position="275"/>
    </location>
</feature>
<feature type="domain" description="PABS" evidence="1">
    <location>
        <begin position="2"/>
        <end position="235"/>
    </location>
</feature>
<feature type="active site" description="Proton acceptor" evidence="1">
    <location>
        <position position="155"/>
    </location>
</feature>
<feature type="binding site" evidence="1">
    <location>
        <position position="31"/>
    </location>
    <ligand>
        <name>S-methyl-5'-thioadenosine</name>
        <dbReference type="ChEBI" id="CHEBI:17509"/>
    </ligand>
</feature>
<feature type="binding site" evidence="1">
    <location>
        <position position="62"/>
    </location>
    <ligand>
        <name>spermidine</name>
        <dbReference type="ChEBI" id="CHEBI:57834"/>
    </ligand>
</feature>
<feature type="binding site" evidence="1">
    <location>
        <position position="86"/>
    </location>
    <ligand>
        <name>spermidine</name>
        <dbReference type="ChEBI" id="CHEBI:57834"/>
    </ligand>
</feature>
<feature type="binding site" evidence="1">
    <location>
        <position position="106"/>
    </location>
    <ligand>
        <name>S-methyl-5'-thioadenosine</name>
        <dbReference type="ChEBI" id="CHEBI:17509"/>
    </ligand>
</feature>
<feature type="binding site" evidence="1">
    <location>
        <begin position="137"/>
        <end position="138"/>
    </location>
    <ligand>
        <name>S-methyl-5'-thioadenosine</name>
        <dbReference type="ChEBI" id="CHEBI:17509"/>
    </ligand>
</feature>
<feature type="binding site" evidence="1">
    <location>
        <begin position="155"/>
        <end position="158"/>
    </location>
    <ligand>
        <name>spermidine</name>
        <dbReference type="ChEBI" id="CHEBI:57834"/>
    </ligand>
</feature>
<feature type="binding site" evidence="1">
    <location>
        <position position="162"/>
    </location>
    <ligand>
        <name>S-methyl-5'-thioadenosine</name>
        <dbReference type="ChEBI" id="CHEBI:17509"/>
    </ligand>
</feature>
<protein>
    <recommendedName>
        <fullName evidence="1">Polyamine aminopropyltransferase</fullName>
    </recommendedName>
    <alternativeName>
        <fullName evidence="1">Putrescine aminopropyltransferase</fullName>
        <shortName evidence="1">PAPT</shortName>
    </alternativeName>
    <alternativeName>
        <fullName evidence="1">Spermidine synthase</fullName>
        <shortName evidence="1">SPDS</shortName>
        <shortName evidence="1">SPDSY</shortName>
        <ecNumber evidence="1">2.5.1.16</ecNumber>
    </alternativeName>
</protein>
<dbReference type="EC" id="2.5.1.16" evidence="1"/>
<dbReference type="EMBL" id="CP000860">
    <property type="protein sequence ID" value="ACA60470.1"/>
    <property type="molecule type" value="Genomic_DNA"/>
</dbReference>
<dbReference type="RefSeq" id="WP_012303045.1">
    <property type="nucleotide sequence ID" value="NC_010424.1"/>
</dbReference>
<dbReference type="SMR" id="B1I5Z0"/>
<dbReference type="STRING" id="477974.Daud_1979"/>
<dbReference type="KEGG" id="dau:Daud_1979"/>
<dbReference type="eggNOG" id="COG0421">
    <property type="taxonomic scope" value="Bacteria"/>
</dbReference>
<dbReference type="HOGENOM" id="CLU_048199_0_0_9"/>
<dbReference type="OrthoDB" id="9793120at2"/>
<dbReference type="UniPathway" id="UPA00248">
    <property type="reaction ID" value="UER00314"/>
</dbReference>
<dbReference type="Proteomes" id="UP000008544">
    <property type="component" value="Chromosome"/>
</dbReference>
<dbReference type="GO" id="GO:0005829">
    <property type="term" value="C:cytosol"/>
    <property type="evidence" value="ECO:0007669"/>
    <property type="project" value="TreeGrafter"/>
</dbReference>
<dbReference type="GO" id="GO:0004766">
    <property type="term" value="F:spermidine synthase activity"/>
    <property type="evidence" value="ECO:0007669"/>
    <property type="project" value="UniProtKB-UniRule"/>
</dbReference>
<dbReference type="GO" id="GO:0008295">
    <property type="term" value="P:spermidine biosynthetic process"/>
    <property type="evidence" value="ECO:0007669"/>
    <property type="project" value="UniProtKB-UniRule"/>
</dbReference>
<dbReference type="CDD" id="cd02440">
    <property type="entry name" value="AdoMet_MTases"/>
    <property type="match status" value="1"/>
</dbReference>
<dbReference type="Gene3D" id="2.30.140.10">
    <property type="entry name" value="Spermidine synthase, tetramerisation domain"/>
    <property type="match status" value="1"/>
</dbReference>
<dbReference type="Gene3D" id="3.40.50.150">
    <property type="entry name" value="Vaccinia Virus protein VP39"/>
    <property type="match status" value="1"/>
</dbReference>
<dbReference type="HAMAP" id="MF_00198">
    <property type="entry name" value="Spermidine_synth"/>
    <property type="match status" value="1"/>
</dbReference>
<dbReference type="InterPro" id="IPR030374">
    <property type="entry name" value="PABS"/>
</dbReference>
<dbReference type="InterPro" id="IPR030373">
    <property type="entry name" value="PABS_CS"/>
</dbReference>
<dbReference type="InterPro" id="IPR029063">
    <property type="entry name" value="SAM-dependent_MTases_sf"/>
</dbReference>
<dbReference type="InterPro" id="IPR001045">
    <property type="entry name" value="Spermi_synthase"/>
</dbReference>
<dbReference type="InterPro" id="IPR035246">
    <property type="entry name" value="Spermidine_synt_N"/>
</dbReference>
<dbReference type="InterPro" id="IPR037163">
    <property type="entry name" value="Spermidine_synt_N_sf"/>
</dbReference>
<dbReference type="NCBIfam" id="NF002010">
    <property type="entry name" value="PRK00811.1"/>
    <property type="match status" value="1"/>
</dbReference>
<dbReference type="NCBIfam" id="TIGR00417">
    <property type="entry name" value="speE"/>
    <property type="match status" value="1"/>
</dbReference>
<dbReference type="PANTHER" id="PTHR11558:SF11">
    <property type="entry name" value="SPERMIDINE SYNTHASE"/>
    <property type="match status" value="1"/>
</dbReference>
<dbReference type="PANTHER" id="PTHR11558">
    <property type="entry name" value="SPERMIDINE/SPERMINE SYNTHASE"/>
    <property type="match status" value="1"/>
</dbReference>
<dbReference type="Pfam" id="PF17284">
    <property type="entry name" value="Spermine_synt_N"/>
    <property type="match status" value="1"/>
</dbReference>
<dbReference type="Pfam" id="PF01564">
    <property type="entry name" value="Spermine_synth"/>
    <property type="match status" value="1"/>
</dbReference>
<dbReference type="SUPFAM" id="SSF53335">
    <property type="entry name" value="S-adenosyl-L-methionine-dependent methyltransferases"/>
    <property type="match status" value="1"/>
</dbReference>
<dbReference type="PROSITE" id="PS01330">
    <property type="entry name" value="PABS_1"/>
    <property type="match status" value="1"/>
</dbReference>
<dbReference type="PROSITE" id="PS51006">
    <property type="entry name" value="PABS_2"/>
    <property type="match status" value="1"/>
</dbReference>